<dbReference type="EMBL" id="CP000094">
    <property type="protein sequence ID" value="ABA76334.1"/>
    <property type="molecule type" value="Genomic_DNA"/>
</dbReference>
<dbReference type="RefSeq" id="WP_007956675.1">
    <property type="nucleotide sequence ID" value="NC_007492.2"/>
</dbReference>
<dbReference type="SMR" id="Q3K7C0"/>
<dbReference type="KEGG" id="pfo:Pfl01_4597"/>
<dbReference type="eggNOG" id="COG1160">
    <property type="taxonomic scope" value="Bacteria"/>
</dbReference>
<dbReference type="HOGENOM" id="CLU_016077_6_2_6"/>
<dbReference type="Proteomes" id="UP000002704">
    <property type="component" value="Chromosome"/>
</dbReference>
<dbReference type="GO" id="GO:0005525">
    <property type="term" value="F:GTP binding"/>
    <property type="evidence" value="ECO:0007669"/>
    <property type="project" value="UniProtKB-UniRule"/>
</dbReference>
<dbReference type="GO" id="GO:0043022">
    <property type="term" value="F:ribosome binding"/>
    <property type="evidence" value="ECO:0007669"/>
    <property type="project" value="TreeGrafter"/>
</dbReference>
<dbReference type="GO" id="GO:0042254">
    <property type="term" value="P:ribosome biogenesis"/>
    <property type="evidence" value="ECO:0007669"/>
    <property type="project" value="UniProtKB-KW"/>
</dbReference>
<dbReference type="CDD" id="cd01894">
    <property type="entry name" value="EngA1"/>
    <property type="match status" value="1"/>
</dbReference>
<dbReference type="CDD" id="cd01895">
    <property type="entry name" value="EngA2"/>
    <property type="match status" value="1"/>
</dbReference>
<dbReference type="FunFam" id="3.30.300.20:FF:000004">
    <property type="entry name" value="GTPase Der"/>
    <property type="match status" value="1"/>
</dbReference>
<dbReference type="FunFam" id="3.40.50.300:FF:000040">
    <property type="entry name" value="GTPase Der"/>
    <property type="match status" value="1"/>
</dbReference>
<dbReference type="FunFam" id="3.40.50.300:FF:000057">
    <property type="entry name" value="GTPase Der"/>
    <property type="match status" value="1"/>
</dbReference>
<dbReference type="Gene3D" id="3.30.300.20">
    <property type="match status" value="1"/>
</dbReference>
<dbReference type="Gene3D" id="3.40.50.300">
    <property type="entry name" value="P-loop containing nucleotide triphosphate hydrolases"/>
    <property type="match status" value="2"/>
</dbReference>
<dbReference type="HAMAP" id="MF_00195">
    <property type="entry name" value="GTPase_Der"/>
    <property type="match status" value="1"/>
</dbReference>
<dbReference type="InterPro" id="IPR031166">
    <property type="entry name" value="G_ENGA"/>
</dbReference>
<dbReference type="InterPro" id="IPR006073">
    <property type="entry name" value="GTP-bd"/>
</dbReference>
<dbReference type="InterPro" id="IPR016484">
    <property type="entry name" value="GTPase_Der"/>
</dbReference>
<dbReference type="InterPro" id="IPR032859">
    <property type="entry name" value="KH_dom-like"/>
</dbReference>
<dbReference type="InterPro" id="IPR015946">
    <property type="entry name" value="KH_dom-like_a/b"/>
</dbReference>
<dbReference type="InterPro" id="IPR027417">
    <property type="entry name" value="P-loop_NTPase"/>
</dbReference>
<dbReference type="InterPro" id="IPR005225">
    <property type="entry name" value="Small_GTP-bd"/>
</dbReference>
<dbReference type="NCBIfam" id="TIGR03594">
    <property type="entry name" value="GTPase_EngA"/>
    <property type="match status" value="1"/>
</dbReference>
<dbReference type="NCBIfam" id="TIGR00231">
    <property type="entry name" value="small_GTP"/>
    <property type="match status" value="2"/>
</dbReference>
<dbReference type="PANTHER" id="PTHR43834">
    <property type="entry name" value="GTPASE DER"/>
    <property type="match status" value="1"/>
</dbReference>
<dbReference type="PANTHER" id="PTHR43834:SF6">
    <property type="entry name" value="GTPASE DER"/>
    <property type="match status" value="1"/>
</dbReference>
<dbReference type="Pfam" id="PF14714">
    <property type="entry name" value="KH_dom-like"/>
    <property type="match status" value="1"/>
</dbReference>
<dbReference type="Pfam" id="PF01926">
    <property type="entry name" value="MMR_HSR1"/>
    <property type="match status" value="2"/>
</dbReference>
<dbReference type="PIRSF" id="PIRSF006485">
    <property type="entry name" value="GTP-binding_EngA"/>
    <property type="match status" value="1"/>
</dbReference>
<dbReference type="PRINTS" id="PR00326">
    <property type="entry name" value="GTP1OBG"/>
</dbReference>
<dbReference type="SUPFAM" id="SSF52540">
    <property type="entry name" value="P-loop containing nucleoside triphosphate hydrolases"/>
    <property type="match status" value="2"/>
</dbReference>
<dbReference type="PROSITE" id="PS51712">
    <property type="entry name" value="G_ENGA"/>
    <property type="match status" value="2"/>
</dbReference>
<name>DER_PSEPF</name>
<gene>
    <name evidence="1" type="primary">der</name>
    <name type="synonym">engA</name>
    <name type="ordered locus">Pfl01_4597</name>
</gene>
<keyword id="KW-0342">GTP-binding</keyword>
<keyword id="KW-0547">Nucleotide-binding</keyword>
<keyword id="KW-0677">Repeat</keyword>
<keyword id="KW-0690">Ribosome biogenesis</keyword>
<organism>
    <name type="scientific">Pseudomonas fluorescens (strain Pf0-1)</name>
    <dbReference type="NCBI Taxonomy" id="205922"/>
    <lineage>
        <taxon>Bacteria</taxon>
        <taxon>Pseudomonadati</taxon>
        <taxon>Pseudomonadota</taxon>
        <taxon>Gammaproteobacteria</taxon>
        <taxon>Pseudomonadales</taxon>
        <taxon>Pseudomonadaceae</taxon>
        <taxon>Pseudomonas</taxon>
    </lineage>
</organism>
<comment type="function">
    <text evidence="1">GTPase that plays an essential role in the late steps of ribosome biogenesis.</text>
</comment>
<comment type="subunit">
    <text evidence="1">Associates with the 50S ribosomal subunit.</text>
</comment>
<comment type="similarity">
    <text evidence="1">Belongs to the TRAFAC class TrmE-Era-EngA-EngB-Septin-like GTPase superfamily. EngA (Der) GTPase family.</text>
</comment>
<sequence length="490" mass="54711">MVPVIALVGRPNVGKSTLFNRLTRTRDAIVGDLSGLTRDRQYGEAKWQGRSYILIDTGGISGDEHGMDEKMAEQSLLAIEEADVVLFLVDAKAGFTAADQMIAEHLRKRNKRSHVVANKVDNIDPEMARAEFAPLGMGHAIPIAGAHGRGITQLLEAALSDFPRDDDEPAEGEEEEVVAEGEEAKRIPGPSEKDGIKIAIIGRPNVGKSTLVNRMLGEDRVIVYDQPGTTRDSIYIPFERNDEKYTLIDTAGVRKRGKIHEEVEKFSVVKTLQAIKDANVVIFVMDAREGVVDHDLNLLGFALEAGRALVIAINKWDGMTPSERDFVKVELQRRLFFVDFADIHFISALHGTGVGNLYASVQNSFKSAVTRWPTSRLTQILEDAVSEHQPPMVNSRRIKLRYAHLGGANPPIIVIHGNQIEKVPKSYVRYLENTYRRVLKLVGTPIRIEFKGGENPYEGNKNTLTDRQVNKKRRLMSHNKKASKKRRDKK</sequence>
<proteinExistence type="inferred from homology"/>
<protein>
    <recommendedName>
        <fullName evidence="1">GTPase Der</fullName>
    </recommendedName>
    <alternativeName>
        <fullName evidence="1">GTP-binding protein EngA</fullName>
    </alternativeName>
</protein>
<reference key="1">
    <citation type="journal article" date="2009" name="Genome Biol.">
        <title>Genomic and genetic analyses of diversity and plant interactions of Pseudomonas fluorescens.</title>
        <authorList>
            <person name="Silby M.W."/>
            <person name="Cerdeno-Tarraga A.M."/>
            <person name="Vernikos G.S."/>
            <person name="Giddens S.R."/>
            <person name="Jackson R.W."/>
            <person name="Preston G.M."/>
            <person name="Zhang X.-X."/>
            <person name="Moon C.D."/>
            <person name="Gehrig S.M."/>
            <person name="Godfrey S.A.C."/>
            <person name="Knight C.G."/>
            <person name="Malone J.G."/>
            <person name="Robinson Z."/>
            <person name="Spiers A.J."/>
            <person name="Harris S."/>
            <person name="Challis G.L."/>
            <person name="Yaxley A.M."/>
            <person name="Harris D."/>
            <person name="Seeger K."/>
            <person name="Murphy L."/>
            <person name="Rutter S."/>
            <person name="Squares R."/>
            <person name="Quail M.A."/>
            <person name="Saunders E."/>
            <person name="Mavromatis K."/>
            <person name="Brettin T.S."/>
            <person name="Bentley S.D."/>
            <person name="Hothersall J."/>
            <person name="Stephens E."/>
            <person name="Thomas C.M."/>
            <person name="Parkhill J."/>
            <person name="Levy S.B."/>
            <person name="Rainey P.B."/>
            <person name="Thomson N.R."/>
        </authorList>
    </citation>
    <scope>NUCLEOTIDE SEQUENCE [LARGE SCALE GENOMIC DNA]</scope>
    <source>
        <strain>Pf0-1</strain>
    </source>
</reference>
<feature type="chain" id="PRO_1000011705" description="GTPase Der">
    <location>
        <begin position="1"/>
        <end position="490"/>
    </location>
</feature>
<feature type="domain" description="EngA-type G 1">
    <location>
        <begin position="3"/>
        <end position="166"/>
    </location>
</feature>
<feature type="domain" description="EngA-type G 2">
    <location>
        <begin position="196"/>
        <end position="369"/>
    </location>
</feature>
<feature type="domain" description="KH-like" evidence="1">
    <location>
        <begin position="370"/>
        <end position="454"/>
    </location>
</feature>
<feature type="region of interest" description="Disordered" evidence="2">
    <location>
        <begin position="162"/>
        <end position="189"/>
    </location>
</feature>
<feature type="region of interest" description="Disordered" evidence="2">
    <location>
        <begin position="453"/>
        <end position="490"/>
    </location>
</feature>
<feature type="compositionally biased region" description="Acidic residues" evidence="2">
    <location>
        <begin position="164"/>
        <end position="181"/>
    </location>
</feature>
<feature type="compositionally biased region" description="Basic residues" evidence="2">
    <location>
        <begin position="470"/>
        <end position="490"/>
    </location>
</feature>
<feature type="binding site" evidence="1">
    <location>
        <begin position="9"/>
        <end position="16"/>
    </location>
    <ligand>
        <name>GTP</name>
        <dbReference type="ChEBI" id="CHEBI:37565"/>
        <label>1</label>
    </ligand>
</feature>
<feature type="binding site" evidence="1">
    <location>
        <begin position="56"/>
        <end position="60"/>
    </location>
    <ligand>
        <name>GTP</name>
        <dbReference type="ChEBI" id="CHEBI:37565"/>
        <label>1</label>
    </ligand>
</feature>
<feature type="binding site" evidence="1">
    <location>
        <begin position="118"/>
        <end position="121"/>
    </location>
    <ligand>
        <name>GTP</name>
        <dbReference type="ChEBI" id="CHEBI:37565"/>
        <label>1</label>
    </ligand>
</feature>
<feature type="binding site" evidence="1">
    <location>
        <begin position="202"/>
        <end position="209"/>
    </location>
    <ligand>
        <name>GTP</name>
        <dbReference type="ChEBI" id="CHEBI:37565"/>
        <label>2</label>
    </ligand>
</feature>
<feature type="binding site" evidence="1">
    <location>
        <begin position="249"/>
        <end position="253"/>
    </location>
    <ligand>
        <name>GTP</name>
        <dbReference type="ChEBI" id="CHEBI:37565"/>
        <label>2</label>
    </ligand>
</feature>
<feature type="binding site" evidence="1">
    <location>
        <begin position="314"/>
        <end position="317"/>
    </location>
    <ligand>
        <name>GTP</name>
        <dbReference type="ChEBI" id="CHEBI:37565"/>
        <label>2</label>
    </ligand>
</feature>
<evidence type="ECO:0000255" key="1">
    <source>
        <dbReference type="HAMAP-Rule" id="MF_00195"/>
    </source>
</evidence>
<evidence type="ECO:0000256" key="2">
    <source>
        <dbReference type="SAM" id="MobiDB-lite"/>
    </source>
</evidence>
<accession>Q3K7C0</accession>